<evidence type="ECO:0000255" key="1">
    <source>
        <dbReference type="HAMAP-Rule" id="MF_00207"/>
    </source>
</evidence>
<organism>
    <name type="scientific">Streptococcus pyogenes serotype M1</name>
    <dbReference type="NCBI Taxonomy" id="301447"/>
    <lineage>
        <taxon>Bacteria</taxon>
        <taxon>Bacillati</taxon>
        <taxon>Bacillota</taxon>
        <taxon>Bacilli</taxon>
        <taxon>Lactobacillales</taxon>
        <taxon>Streptococcaceae</taxon>
        <taxon>Streptococcus</taxon>
    </lineage>
</organism>
<gene>
    <name evidence="1" type="primary">ppaC</name>
    <name type="ordered locus">SPy_0380</name>
    <name type="ordered locus">M5005_Spy0319</name>
</gene>
<accession>P65757</accession>
<accession>Q490N0</accession>
<accession>Q8K8I2</accession>
<accession>Q9A1A2</accession>
<proteinExistence type="inferred from homology"/>
<protein>
    <recommendedName>
        <fullName evidence="1">Probable manganese-dependent inorganic pyrophosphatase</fullName>
        <ecNumber evidence="1">3.6.1.1</ecNumber>
    </recommendedName>
    <alternativeName>
        <fullName evidence="1">Pyrophosphate phospho-hydrolase</fullName>
        <shortName evidence="1">PPase</shortName>
    </alternativeName>
</protein>
<feature type="chain" id="PRO_0000158593" description="Probable manganese-dependent inorganic pyrophosphatase">
    <location>
        <begin position="1"/>
        <end position="311"/>
    </location>
</feature>
<feature type="binding site" evidence="1">
    <location>
        <position position="9"/>
    </location>
    <ligand>
        <name>Mn(2+)</name>
        <dbReference type="ChEBI" id="CHEBI:29035"/>
        <label>1</label>
    </ligand>
</feature>
<feature type="binding site" evidence="1">
    <location>
        <position position="13"/>
    </location>
    <ligand>
        <name>Mn(2+)</name>
        <dbReference type="ChEBI" id="CHEBI:29035"/>
        <label>1</label>
    </ligand>
</feature>
<feature type="binding site" evidence="1">
    <location>
        <position position="15"/>
    </location>
    <ligand>
        <name>Mn(2+)</name>
        <dbReference type="ChEBI" id="CHEBI:29035"/>
        <label>2</label>
    </ligand>
</feature>
<feature type="binding site" evidence="1">
    <location>
        <position position="77"/>
    </location>
    <ligand>
        <name>Mn(2+)</name>
        <dbReference type="ChEBI" id="CHEBI:29035"/>
        <label>1</label>
    </ligand>
</feature>
<feature type="binding site" evidence="1">
    <location>
        <position position="77"/>
    </location>
    <ligand>
        <name>Mn(2+)</name>
        <dbReference type="ChEBI" id="CHEBI:29035"/>
        <label>2</label>
    </ligand>
</feature>
<feature type="binding site" evidence="1">
    <location>
        <position position="99"/>
    </location>
    <ligand>
        <name>Mn(2+)</name>
        <dbReference type="ChEBI" id="CHEBI:29035"/>
        <label>2</label>
    </ligand>
</feature>
<feature type="binding site" evidence="1">
    <location>
        <position position="151"/>
    </location>
    <ligand>
        <name>Mn(2+)</name>
        <dbReference type="ChEBI" id="CHEBI:29035"/>
        <label>2</label>
    </ligand>
</feature>
<dbReference type="EC" id="3.6.1.1" evidence="1"/>
<dbReference type="EMBL" id="AE004092">
    <property type="protein sequence ID" value="AAK33422.1"/>
    <property type="molecule type" value="Genomic_DNA"/>
</dbReference>
<dbReference type="EMBL" id="CP000017">
    <property type="protein sequence ID" value="AAZ50938.1"/>
    <property type="molecule type" value="Genomic_DNA"/>
</dbReference>
<dbReference type="RefSeq" id="NP_268701.1">
    <property type="nucleotide sequence ID" value="NC_002737.2"/>
</dbReference>
<dbReference type="SMR" id="P65757"/>
<dbReference type="PaxDb" id="1314-HKU360_00357"/>
<dbReference type="KEGG" id="spy:SPy_0380"/>
<dbReference type="KEGG" id="spz:M5005_Spy0319"/>
<dbReference type="PATRIC" id="fig|160490.10.peg.328"/>
<dbReference type="HOGENOM" id="CLU_025243_0_1_9"/>
<dbReference type="OMA" id="VGCSNTI"/>
<dbReference type="Proteomes" id="UP000000750">
    <property type="component" value="Chromosome"/>
</dbReference>
<dbReference type="GO" id="GO:0005737">
    <property type="term" value="C:cytoplasm"/>
    <property type="evidence" value="ECO:0007669"/>
    <property type="project" value="UniProtKB-SubCell"/>
</dbReference>
<dbReference type="GO" id="GO:0004427">
    <property type="term" value="F:inorganic diphosphate phosphatase activity"/>
    <property type="evidence" value="ECO:0007669"/>
    <property type="project" value="UniProtKB-UniRule"/>
</dbReference>
<dbReference type="GO" id="GO:0030145">
    <property type="term" value="F:manganese ion binding"/>
    <property type="evidence" value="ECO:0007669"/>
    <property type="project" value="UniProtKB-UniRule"/>
</dbReference>
<dbReference type="FunFam" id="3.10.310.20:FF:000001">
    <property type="entry name" value="Probable manganese-dependent inorganic pyrophosphatase"/>
    <property type="match status" value="1"/>
</dbReference>
<dbReference type="FunFam" id="3.90.1640.10:FF:000001">
    <property type="entry name" value="Probable manganese-dependent inorganic pyrophosphatase"/>
    <property type="match status" value="1"/>
</dbReference>
<dbReference type="Gene3D" id="3.10.310.20">
    <property type="entry name" value="DHHA2 domain"/>
    <property type="match status" value="1"/>
</dbReference>
<dbReference type="Gene3D" id="3.90.1640.10">
    <property type="entry name" value="inorganic pyrophosphatase (n-terminal core)"/>
    <property type="match status" value="1"/>
</dbReference>
<dbReference type="HAMAP" id="MF_00207">
    <property type="entry name" value="PPase_C"/>
    <property type="match status" value="1"/>
</dbReference>
<dbReference type="InterPro" id="IPR001667">
    <property type="entry name" value="DDH_dom"/>
</dbReference>
<dbReference type="InterPro" id="IPR038763">
    <property type="entry name" value="DHH_sf"/>
</dbReference>
<dbReference type="InterPro" id="IPR004097">
    <property type="entry name" value="DHHA2"/>
</dbReference>
<dbReference type="InterPro" id="IPR038222">
    <property type="entry name" value="DHHA2_dom_sf"/>
</dbReference>
<dbReference type="InterPro" id="IPR022934">
    <property type="entry name" value="Mn-dep_inorganic_PyrPase"/>
</dbReference>
<dbReference type="InterPro" id="IPR051319">
    <property type="entry name" value="Oligoribo/pAp-PDE_c-di-AMP_PDE"/>
</dbReference>
<dbReference type="NCBIfam" id="NF003877">
    <property type="entry name" value="PRK05427.1"/>
    <property type="match status" value="1"/>
</dbReference>
<dbReference type="PANTHER" id="PTHR47618">
    <property type="entry name" value="BIFUNCTIONAL OLIGORIBONUCLEASE AND PAP PHOSPHATASE NRNA"/>
    <property type="match status" value="1"/>
</dbReference>
<dbReference type="PANTHER" id="PTHR47618:SF1">
    <property type="entry name" value="BIFUNCTIONAL OLIGORIBONUCLEASE AND PAP PHOSPHATASE NRNA"/>
    <property type="match status" value="1"/>
</dbReference>
<dbReference type="Pfam" id="PF01368">
    <property type="entry name" value="DHH"/>
    <property type="match status" value="1"/>
</dbReference>
<dbReference type="Pfam" id="PF02833">
    <property type="entry name" value="DHHA2"/>
    <property type="match status" value="1"/>
</dbReference>
<dbReference type="SMART" id="SM01131">
    <property type="entry name" value="DHHA2"/>
    <property type="match status" value="1"/>
</dbReference>
<dbReference type="SUPFAM" id="SSF64182">
    <property type="entry name" value="DHH phosphoesterases"/>
    <property type="match status" value="1"/>
</dbReference>
<comment type="catalytic activity">
    <reaction evidence="1">
        <text>diphosphate + H2O = 2 phosphate + H(+)</text>
        <dbReference type="Rhea" id="RHEA:24576"/>
        <dbReference type="ChEBI" id="CHEBI:15377"/>
        <dbReference type="ChEBI" id="CHEBI:15378"/>
        <dbReference type="ChEBI" id="CHEBI:33019"/>
        <dbReference type="ChEBI" id="CHEBI:43474"/>
        <dbReference type="EC" id="3.6.1.1"/>
    </reaction>
</comment>
<comment type="cofactor">
    <cofactor evidence="1">
        <name>Mn(2+)</name>
        <dbReference type="ChEBI" id="CHEBI:29035"/>
    </cofactor>
    <text evidence="1">Binds 2 manganese ions per subunit.</text>
</comment>
<comment type="subcellular location">
    <subcellularLocation>
        <location evidence="1">Cytoplasm</location>
    </subcellularLocation>
</comment>
<comment type="similarity">
    <text evidence="1">Belongs to the PPase class C family.</text>
</comment>
<reference key="1">
    <citation type="journal article" date="2001" name="Proc. Natl. Acad. Sci. U.S.A.">
        <title>Complete genome sequence of an M1 strain of Streptococcus pyogenes.</title>
        <authorList>
            <person name="Ferretti J.J."/>
            <person name="McShan W.M."/>
            <person name="Ajdic D.J."/>
            <person name="Savic D.J."/>
            <person name="Savic G."/>
            <person name="Lyon K."/>
            <person name="Primeaux C."/>
            <person name="Sezate S."/>
            <person name="Suvorov A.N."/>
            <person name="Kenton S."/>
            <person name="Lai H.S."/>
            <person name="Lin S.P."/>
            <person name="Qian Y."/>
            <person name="Jia H.G."/>
            <person name="Najar F.Z."/>
            <person name="Ren Q."/>
            <person name="Zhu H."/>
            <person name="Song L."/>
            <person name="White J."/>
            <person name="Yuan X."/>
            <person name="Clifton S.W."/>
            <person name="Roe B.A."/>
            <person name="McLaughlin R.E."/>
        </authorList>
    </citation>
    <scope>NUCLEOTIDE SEQUENCE [LARGE SCALE GENOMIC DNA]</scope>
    <source>
        <strain>ATCC 700294 / SF370 / Serotype M1</strain>
    </source>
</reference>
<reference key="2">
    <citation type="journal article" date="2005" name="J. Infect. Dis.">
        <title>Evolutionary origin and emergence of a highly successful clone of serotype M1 group A Streptococcus involved multiple horizontal gene transfer events.</title>
        <authorList>
            <person name="Sumby P."/>
            <person name="Porcella S.F."/>
            <person name="Madrigal A.G."/>
            <person name="Barbian K.D."/>
            <person name="Virtaneva K."/>
            <person name="Ricklefs S.M."/>
            <person name="Sturdevant D.E."/>
            <person name="Graham M.R."/>
            <person name="Vuopio-Varkila J."/>
            <person name="Hoe N.P."/>
            <person name="Musser J.M."/>
        </authorList>
    </citation>
    <scope>NUCLEOTIDE SEQUENCE [LARGE SCALE GENOMIC DNA]</scope>
    <source>
        <strain>ATCC BAA-947 / MGAS5005 / Serotype M1</strain>
    </source>
</reference>
<keyword id="KW-0963">Cytoplasm</keyword>
<keyword id="KW-0378">Hydrolase</keyword>
<keyword id="KW-0464">Manganese</keyword>
<keyword id="KW-0479">Metal-binding</keyword>
<keyword id="KW-1185">Reference proteome</keyword>
<name>PPAC_STRP1</name>
<sequence length="311" mass="33617">MSKILVFGHQNPDTDAIASSYAFDYLSQKAFGLDTEVVALGTPNEETAFALDYFGVEAPRVVESAKAQGSEQVILTDHNEFQQSIADIREVEVYGVVDHHRVANFETANPLYMRVEPVGSASSIVYRMFKENGIEVPKAIAGMLLSGLISDTLLLKSPTTHVSDHLVAEELAELAEVNLEDYGMALLKAGTNLASKSEVELIGIDAKTFELNGNAVRVAQVNTVDIAEVLERQEAIEAAIKDAMAAEGYSDFVLMITDIVNSNSEILAIGANMDKVEAAFNFTLDNNHAFLAGAVSRKKQVVPQLTESFGA</sequence>